<gene>
    <name evidence="1" type="primary">rpmE</name>
    <name type="ordered locus">Rsph17029_2704</name>
</gene>
<proteinExistence type="inferred from homology"/>
<evidence type="ECO:0000255" key="1">
    <source>
        <dbReference type="HAMAP-Rule" id="MF_00501"/>
    </source>
</evidence>
<evidence type="ECO:0000305" key="2"/>
<keyword id="KW-0687">Ribonucleoprotein</keyword>
<keyword id="KW-0689">Ribosomal protein</keyword>
<keyword id="KW-0694">RNA-binding</keyword>
<keyword id="KW-0699">rRNA-binding</keyword>
<accession>A3PN90</accession>
<sequence>MKKGIHPDYHMIDVKMTDGTVFQIRSTWGKEGEQMALEIDPLAHPAWTGGTAKLMDTGGRVSKFKNKYAGLGF</sequence>
<name>RL31_CERS1</name>
<dbReference type="EMBL" id="CP000577">
    <property type="protein sequence ID" value="ABN77806.1"/>
    <property type="molecule type" value="Genomic_DNA"/>
</dbReference>
<dbReference type="RefSeq" id="WP_002721385.1">
    <property type="nucleotide sequence ID" value="NC_009049.1"/>
</dbReference>
<dbReference type="SMR" id="A3PN90"/>
<dbReference type="GeneID" id="67447816"/>
<dbReference type="KEGG" id="rsh:Rsph17029_2704"/>
<dbReference type="HOGENOM" id="CLU_114306_3_2_5"/>
<dbReference type="GO" id="GO:1990904">
    <property type="term" value="C:ribonucleoprotein complex"/>
    <property type="evidence" value="ECO:0007669"/>
    <property type="project" value="UniProtKB-KW"/>
</dbReference>
<dbReference type="GO" id="GO:0005840">
    <property type="term" value="C:ribosome"/>
    <property type="evidence" value="ECO:0007669"/>
    <property type="project" value="UniProtKB-KW"/>
</dbReference>
<dbReference type="GO" id="GO:0019843">
    <property type="term" value="F:rRNA binding"/>
    <property type="evidence" value="ECO:0007669"/>
    <property type="project" value="UniProtKB-KW"/>
</dbReference>
<dbReference type="GO" id="GO:0003735">
    <property type="term" value="F:structural constituent of ribosome"/>
    <property type="evidence" value="ECO:0007669"/>
    <property type="project" value="InterPro"/>
</dbReference>
<dbReference type="GO" id="GO:0006412">
    <property type="term" value="P:translation"/>
    <property type="evidence" value="ECO:0007669"/>
    <property type="project" value="UniProtKB-UniRule"/>
</dbReference>
<dbReference type="Gene3D" id="4.10.830.30">
    <property type="entry name" value="Ribosomal protein L31"/>
    <property type="match status" value="1"/>
</dbReference>
<dbReference type="HAMAP" id="MF_00501">
    <property type="entry name" value="Ribosomal_bL31_1"/>
    <property type="match status" value="1"/>
</dbReference>
<dbReference type="InterPro" id="IPR034704">
    <property type="entry name" value="Ribosomal_bL28/bL31-like_sf"/>
</dbReference>
<dbReference type="InterPro" id="IPR002150">
    <property type="entry name" value="Ribosomal_bL31"/>
</dbReference>
<dbReference type="InterPro" id="IPR027491">
    <property type="entry name" value="Ribosomal_bL31_A"/>
</dbReference>
<dbReference type="InterPro" id="IPR042105">
    <property type="entry name" value="Ribosomal_bL31_sf"/>
</dbReference>
<dbReference type="NCBIfam" id="TIGR00105">
    <property type="entry name" value="L31"/>
    <property type="match status" value="1"/>
</dbReference>
<dbReference type="NCBIfam" id="NF001809">
    <property type="entry name" value="PRK00528.1"/>
    <property type="match status" value="1"/>
</dbReference>
<dbReference type="PANTHER" id="PTHR33280">
    <property type="entry name" value="50S RIBOSOMAL PROTEIN L31, CHLOROPLASTIC"/>
    <property type="match status" value="1"/>
</dbReference>
<dbReference type="PANTHER" id="PTHR33280:SF6">
    <property type="entry name" value="LARGE RIBOSOMAL SUBUNIT PROTEIN BL31A"/>
    <property type="match status" value="1"/>
</dbReference>
<dbReference type="Pfam" id="PF01197">
    <property type="entry name" value="Ribosomal_L31"/>
    <property type="match status" value="1"/>
</dbReference>
<dbReference type="PRINTS" id="PR01249">
    <property type="entry name" value="RIBOSOMALL31"/>
</dbReference>
<dbReference type="SUPFAM" id="SSF143800">
    <property type="entry name" value="L28p-like"/>
    <property type="match status" value="1"/>
</dbReference>
<dbReference type="PROSITE" id="PS01143">
    <property type="entry name" value="RIBOSOMAL_L31"/>
    <property type="match status" value="1"/>
</dbReference>
<protein>
    <recommendedName>
        <fullName evidence="1">Large ribosomal subunit protein bL31</fullName>
    </recommendedName>
    <alternativeName>
        <fullName evidence="2">50S ribosomal protein L31</fullName>
    </alternativeName>
</protein>
<reference key="1">
    <citation type="submission" date="2007-02" db="EMBL/GenBank/DDBJ databases">
        <title>Complete sequence of chromosome 1 of Rhodobacter sphaeroides ATCC 17029.</title>
        <authorList>
            <person name="Copeland A."/>
            <person name="Lucas S."/>
            <person name="Lapidus A."/>
            <person name="Barry K."/>
            <person name="Detter J.C."/>
            <person name="Glavina del Rio T."/>
            <person name="Hammon N."/>
            <person name="Israni S."/>
            <person name="Dalin E."/>
            <person name="Tice H."/>
            <person name="Pitluck S."/>
            <person name="Kiss H."/>
            <person name="Brettin T."/>
            <person name="Bruce D."/>
            <person name="Han C."/>
            <person name="Tapia R."/>
            <person name="Gilna P."/>
            <person name="Schmutz J."/>
            <person name="Larimer F."/>
            <person name="Land M."/>
            <person name="Hauser L."/>
            <person name="Kyrpides N."/>
            <person name="Mikhailova N."/>
            <person name="Richardson P."/>
            <person name="Mackenzie C."/>
            <person name="Choudhary M."/>
            <person name="Donohue T.J."/>
            <person name="Kaplan S."/>
        </authorList>
    </citation>
    <scope>NUCLEOTIDE SEQUENCE [LARGE SCALE GENOMIC DNA]</scope>
    <source>
        <strain>ATCC 17029 / ATH 2.4.9</strain>
    </source>
</reference>
<feature type="chain" id="PRO_1000126711" description="Large ribosomal subunit protein bL31">
    <location>
        <begin position="1"/>
        <end position="73"/>
    </location>
</feature>
<comment type="function">
    <text evidence="1">Binds the 23S rRNA.</text>
</comment>
<comment type="subunit">
    <text evidence="1">Part of the 50S ribosomal subunit.</text>
</comment>
<comment type="similarity">
    <text evidence="1">Belongs to the bacterial ribosomal protein bL31 family. Type A subfamily.</text>
</comment>
<organism>
    <name type="scientific">Cereibacter sphaeroides (strain ATCC 17029 / ATH 2.4.9)</name>
    <name type="common">Rhodobacter sphaeroides</name>
    <dbReference type="NCBI Taxonomy" id="349101"/>
    <lineage>
        <taxon>Bacteria</taxon>
        <taxon>Pseudomonadati</taxon>
        <taxon>Pseudomonadota</taxon>
        <taxon>Alphaproteobacteria</taxon>
        <taxon>Rhodobacterales</taxon>
        <taxon>Paracoccaceae</taxon>
        <taxon>Cereibacter</taxon>
    </lineage>
</organism>